<organismHost>
    <name type="scientific">Homo sapiens</name>
    <name type="common">Human</name>
    <dbReference type="NCBI Taxonomy" id="9606"/>
</organismHost>
<evidence type="ECO:0000255" key="1">
    <source>
        <dbReference type="HAMAP-Rule" id="MF_04000"/>
    </source>
</evidence>
<proteinExistence type="inferred from homology"/>
<gene>
    <name evidence="1" type="primary">E1</name>
</gene>
<dbReference type="EC" id="5.6.2.4" evidence="1"/>
<dbReference type="EMBL" id="X94165">
    <property type="protein sequence ID" value="CAA63884.1"/>
    <property type="molecule type" value="Genomic_DNA"/>
</dbReference>
<dbReference type="SMR" id="Q82007"/>
<dbReference type="Proteomes" id="UP000246263">
    <property type="component" value="Genome"/>
</dbReference>
<dbReference type="GO" id="GO:0042025">
    <property type="term" value="C:host cell nucleus"/>
    <property type="evidence" value="ECO:0007669"/>
    <property type="project" value="UniProtKB-SubCell"/>
</dbReference>
<dbReference type="GO" id="GO:0005524">
    <property type="term" value="F:ATP binding"/>
    <property type="evidence" value="ECO:0007669"/>
    <property type="project" value="UniProtKB-UniRule"/>
</dbReference>
<dbReference type="GO" id="GO:0016887">
    <property type="term" value="F:ATP hydrolysis activity"/>
    <property type="evidence" value="ECO:0007669"/>
    <property type="project" value="RHEA"/>
</dbReference>
<dbReference type="GO" id="GO:0003677">
    <property type="term" value="F:DNA binding"/>
    <property type="evidence" value="ECO:0007669"/>
    <property type="project" value="UniProtKB-UniRule"/>
</dbReference>
<dbReference type="GO" id="GO:0003678">
    <property type="term" value="F:DNA helicase activity"/>
    <property type="evidence" value="ECO:0007669"/>
    <property type="project" value="UniProtKB-UniRule"/>
</dbReference>
<dbReference type="GO" id="GO:0006260">
    <property type="term" value="P:DNA replication"/>
    <property type="evidence" value="ECO:0007669"/>
    <property type="project" value="UniProtKB-UniRule"/>
</dbReference>
<dbReference type="Gene3D" id="3.40.1310.10">
    <property type="match status" value="1"/>
</dbReference>
<dbReference type="Gene3D" id="3.40.50.300">
    <property type="entry name" value="P-loop containing nucleotide triphosphate hydrolases"/>
    <property type="match status" value="1"/>
</dbReference>
<dbReference type="Gene3D" id="1.10.10.510">
    <property type="entry name" value="Zinc finger, large T-antigen D1 domain"/>
    <property type="match status" value="1"/>
</dbReference>
<dbReference type="HAMAP" id="MF_04000">
    <property type="entry name" value="PPV_E1"/>
    <property type="match status" value="1"/>
</dbReference>
<dbReference type="InterPro" id="IPR014015">
    <property type="entry name" value="Helicase_SF3_DNA-vir"/>
</dbReference>
<dbReference type="InterPro" id="IPR027417">
    <property type="entry name" value="P-loop_NTPase"/>
</dbReference>
<dbReference type="InterPro" id="IPR001177">
    <property type="entry name" value="PPV_DNA_helicase_E1_C"/>
</dbReference>
<dbReference type="InterPro" id="IPR014000">
    <property type="entry name" value="PPV_DNA_helicase_E1_N"/>
</dbReference>
<dbReference type="InterPro" id="IPR046832">
    <property type="entry name" value="PPV_E1_DBD"/>
</dbReference>
<dbReference type="InterPro" id="IPR046935">
    <property type="entry name" value="PPV_E1_DBD_sf"/>
</dbReference>
<dbReference type="InterPro" id="IPR016393">
    <property type="entry name" value="Rep_E1_papillomaV"/>
</dbReference>
<dbReference type="InterPro" id="IPR037102">
    <property type="entry name" value="Znf_lg_T-Ag_D1_dom_sf"/>
</dbReference>
<dbReference type="Pfam" id="PF00519">
    <property type="entry name" value="PPV_E1_C"/>
    <property type="match status" value="1"/>
</dbReference>
<dbReference type="Pfam" id="PF20450">
    <property type="entry name" value="PPV_E1_DBD"/>
    <property type="match status" value="1"/>
</dbReference>
<dbReference type="Pfam" id="PF00524">
    <property type="entry name" value="PPV_E1_N"/>
    <property type="match status" value="1"/>
</dbReference>
<dbReference type="PIRSF" id="PIRSF003383">
    <property type="entry name" value="Rep_E1_papillomaV"/>
    <property type="match status" value="1"/>
</dbReference>
<dbReference type="SUPFAM" id="SSF55464">
    <property type="entry name" value="Origin of replication-binding domain, RBD-like"/>
    <property type="match status" value="1"/>
</dbReference>
<dbReference type="SUPFAM" id="SSF52540">
    <property type="entry name" value="P-loop containing nucleoside triphosphate hydrolases"/>
    <property type="match status" value="1"/>
</dbReference>
<dbReference type="PROSITE" id="PS51206">
    <property type="entry name" value="SF3_HELICASE_1"/>
    <property type="match status" value="1"/>
</dbReference>
<protein>
    <recommendedName>
        <fullName evidence="1">Replication protein E1</fullName>
        <ecNumber evidence="1">5.6.2.4</ecNumber>
    </recommendedName>
    <alternativeName>
        <fullName evidence="1">ATP-dependent helicase E1</fullName>
    </alternativeName>
    <alternativeName>
        <fullName evidence="1">DNA 3'-5' helicase E1</fullName>
    </alternativeName>
</protein>
<name>VE1_HPV73</name>
<reference key="1">
    <citation type="journal article" date="1996" name="Int. J. Cancer">
        <title>Novel HPV types present in oral papillomatous lesions from patients with HIV infection.</title>
        <authorList>
            <person name="Voelter C."/>
            <person name="He Y."/>
            <person name="Delius H."/>
            <person name="Roy-Burman A."/>
            <person name="Greenspan J.S."/>
            <person name="Greenspan D."/>
            <person name="de Villiers E.-M."/>
        </authorList>
    </citation>
    <scope>NUCLEOTIDE SEQUENCE [GENOMIC DNA]</scope>
</reference>
<comment type="function">
    <text evidence="1">ATP-dependent DNA 3'-5' helicase required for initiation of viral DNA replication. It forms a complex with the viral E2 protein. The E1-E2 complex binds to the replication origin which contains binding sites for both proteins. During the initial step, a dimer of E1 interacts with a dimer of protein E2 leading to a complex that binds the viral origin of replication with high specificity. Then, a second dimer of E1 displaces the E2 dimer in an ATP-dependent manner to form the E1 tetramer. Following this, two E1 monomers are added to each half of the site, which results in the formation of two E1 trimers on the viral ori. Subsequently, two hexamers will be created. The double hexamer acts as a bi-directional helicase machinery and unwinds the viral DNA and then recruits the host DNA polymerase to start replication.</text>
</comment>
<comment type="catalytic activity">
    <reaction evidence="1">
        <text>Couples ATP hydrolysis with the unwinding of duplex DNA by translocating in the 3'-5' direction.</text>
        <dbReference type="EC" id="5.6.2.4"/>
    </reaction>
</comment>
<comment type="catalytic activity">
    <reaction evidence="1">
        <text>ATP + H2O = ADP + phosphate + H(+)</text>
        <dbReference type="Rhea" id="RHEA:13065"/>
        <dbReference type="ChEBI" id="CHEBI:15377"/>
        <dbReference type="ChEBI" id="CHEBI:15378"/>
        <dbReference type="ChEBI" id="CHEBI:30616"/>
        <dbReference type="ChEBI" id="CHEBI:43474"/>
        <dbReference type="ChEBI" id="CHEBI:456216"/>
        <dbReference type="EC" id="5.6.2.4"/>
    </reaction>
</comment>
<comment type="subunit">
    <text evidence="1">Can form hexamers. Interacts with E2 protein; this interaction increases E1 DNA binding specificity. Interacts with host DNA polymerase subunit POLA2. Interacts with host single stranded DNA-binding protein RPA1. Interacts with host TOP1; this interaction stimulates the enzymatic activity of TOP1.</text>
</comment>
<comment type="subcellular location">
    <subcellularLocation>
        <location evidence="1">Host nucleus</location>
    </subcellularLocation>
</comment>
<comment type="PTM">
    <text evidence="1">Phosphorylated.</text>
</comment>
<comment type="PTM">
    <text evidence="1">Sumoylated.</text>
</comment>
<comment type="similarity">
    <text evidence="1">Belongs to the papillomaviridae E1 protein family.</text>
</comment>
<feature type="chain" id="PRO_0000133161" description="Replication protein E1">
    <location>
        <begin position="1"/>
        <end position="650"/>
    </location>
</feature>
<feature type="domain" description="SF3 helicase" evidence="1">
    <location>
        <begin position="452"/>
        <end position="602"/>
    </location>
</feature>
<feature type="region of interest" description="DNA-binding region" evidence="1">
    <location>
        <begin position="187"/>
        <end position="353"/>
    </location>
</feature>
<feature type="short sequence motif" description="Nuclear localization signal" evidence="1">
    <location>
        <begin position="84"/>
        <end position="86"/>
    </location>
</feature>
<feature type="short sequence motif" description="Nuclear export signal" evidence="1">
    <location>
        <begin position="107"/>
        <end position="116"/>
    </location>
</feature>
<feature type="binding site" evidence="1">
    <location>
        <begin position="478"/>
        <end position="485"/>
    </location>
    <ligand>
        <name>ATP</name>
        <dbReference type="ChEBI" id="CHEBI:30616"/>
    </ligand>
</feature>
<feature type="modified residue" description="Phosphoserine; by host" evidence="1">
    <location>
        <position position="90"/>
    </location>
</feature>
<feature type="modified residue" description="Phosphoserine; by host" evidence="1">
    <location>
        <position position="94"/>
    </location>
</feature>
<feature type="modified residue" description="Phosphoserine; by host" evidence="1">
    <location>
        <position position="108"/>
    </location>
</feature>
<feature type="modified residue" description="Phosphoserine; by host" evidence="1">
    <location>
        <position position="121"/>
    </location>
</feature>
<feature type="cross-link" description="Glycyl lysine isopeptide (Lys-Gly) (interchain with G-Cter in SUMO)" evidence="1">
    <location>
        <position position="559"/>
    </location>
</feature>
<accession>Q82007</accession>
<sequence>MADSGNWEGRCTGWFNVEAIVERKTGDPIPEDENYDGGDTDESEMGDFIDNAHIPNIYAQQEIAQALYQSQQANADNEAIRVLKRKFTGSPGGSPDMKRDEFIDKQLSPQINVLSISSGRSTSKRRLFEEQDSGYGNTEVETYETEVPGLGAGVGCLQNVNEEGNQIVSPRESSSGSSSISNMDIETESTPITDITNLLQRNNAKAALLAKFKEVYGLSYMELVRPYKSDKTHCQDWVCAVFGVIPSLAESLKSLLTQYCMYIHLQCLTCTWGIIVLVLVRFKCNKNRLTVQKLLSSLLNVTQERMLIEPPRLRSTPCALYWYRTSLSNISEIVGDTPEWIKRQTLVQHSLDDSQFDLSQMIQWAFDNDITDDCEIAYKYALLGNVDSNAAAFLKSNAQAKYVKDCGTMCRHYKAAERKQMSMAQWIQHRCDLTNDGGNWKDIVLFLRYQNVEFMPFLITLKQFLKGIPKQNCIVLYGPPDTGKSHFGMSLIKFIQGVVISYVNSTSHFWLSPLADAKMALLDDATPGCWTYIDKYLRNALDGNPICLDRKHKNLLQVKCPPLLITSNTNPKADDTWKYLHSRIKVFTFLNPFPFDSNGNPLYQLTNENWKAFFTKTWSKLDLTEDDDKENDGDTVQTFKCVSGRNPRTV</sequence>
<organism>
    <name type="scientific">Human papillomavirus 73</name>
    <dbReference type="NCBI Taxonomy" id="51033"/>
    <lineage>
        <taxon>Viruses</taxon>
        <taxon>Monodnaviria</taxon>
        <taxon>Shotokuvirae</taxon>
        <taxon>Cossaviricota</taxon>
        <taxon>Papovaviricetes</taxon>
        <taxon>Zurhausenvirales</taxon>
        <taxon>Papillomaviridae</taxon>
        <taxon>Firstpapillomavirinae</taxon>
        <taxon>Alphapapillomavirus</taxon>
        <taxon>Alphapapillomavirus 11</taxon>
    </lineage>
</organism>
<keyword id="KW-0067">ATP-binding</keyword>
<keyword id="KW-0235">DNA replication</keyword>
<keyword id="KW-0238">DNA-binding</keyword>
<keyword id="KW-0244">Early protein</keyword>
<keyword id="KW-0347">Helicase</keyword>
<keyword id="KW-1048">Host nucleus</keyword>
<keyword id="KW-0378">Hydrolase</keyword>
<keyword id="KW-0413">Isomerase</keyword>
<keyword id="KW-1017">Isopeptide bond</keyword>
<keyword id="KW-0547">Nucleotide-binding</keyword>
<keyword id="KW-0597">Phosphoprotein</keyword>
<keyword id="KW-1185">Reference proteome</keyword>
<keyword id="KW-0832">Ubl conjugation</keyword>